<dbReference type="EMBL" id="Y07901">
    <property type="protein sequence ID" value="CAA69208.1"/>
    <property type="molecule type" value="mRNA"/>
</dbReference>
<dbReference type="SMR" id="Q98998"/>
<dbReference type="GlyCosmos" id="Q98998">
    <property type="glycosylation" value="2 sites, No reported glycans"/>
</dbReference>
<dbReference type="GeneID" id="378605"/>
<dbReference type="KEGG" id="xla:378605"/>
<dbReference type="AGR" id="Xenbase:XB-GENE-984751"/>
<dbReference type="CTD" id="378605"/>
<dbReference type="Xenbase" id="XB-GENE-984751">
    <property type="gene designation" value="htr1a.L"/>
</dbReference>
<dbReference type="OrthoDB" id="5955450at2759"/>
<dbReference type="Proteomes" id="UP000186698">
    <property type="component" value="Chromosome 1L"/>
</dbReference>
<dbReference type="Bgee" id="378605">
    <property type="expression patterns" value="Expressed in brain and 2 other cell types or tissues"/>
</dbReference>
<dbReference type="GO" id="GO:0016020">
    <property type="term" value="C:membrane"/>
    <property type="evidence" value="ECO:0000303"/>
    <property type="project" value="UniProtKB"/>
</dbReference>
<dbReference type="GO" id="GO:0005886">
    <property type="term" value="C:plasma membrane"/>
    <property type="evidence" value="ECO:0000250"/>
    <property type="project" value="UniProtKB"/>
</dbReference>
<dbReference type="GO" id="GO:0004930">
    <property type="term" value="F:G protein-coupled receptor activity"/>
    <property type="evidence" value="ECO:0000318"/>
    <property type="project" value="GO_Central"/>
</dbReference>
<dbReference type="GO" id="GO:0004993">
    <property type="term" value="F:G protein-coupled serotonin receptor activity"/>
    <property type="evidence" value="ECO:0000250"/>
    <property type="project" value="UniProtKB"/>
</dbReference>
<dbReference type="GO" id="GO:0071880">
    <property type="term" value="P:adenylate cyclase-activating adrenergic receptor signaling pathway"/>
    <property type="evidence" value="ECO:0000318"/>
    <property type="project" value="GO_Central"/>
</dbReference>
<dbReference type="GO" id="GO:0007198">
    <property type="term" value="P:adenylate cyclase-inhibiting serotonin receptor signaling pathway"/>
    <property type="evidence" value="ECO:0000250"/>
    <property type="project" value="UniProtKB"/>
</dbReference>
<dbReference type="GO" id="GO:0006260">
    <property type="term" value="P:DNA replication"/>
    <property type="evidence" value="ECO:0000314"/>
    <property type="project" value="UniProtKB"/>
</dbReference>
<dbReference type="GO" id="GO:0043410">
    <property type="term" value="P:positive regulation of MAPK cascade"/>
    <property type="evidence" value="ECO:0000318"/>
    <property type="project" value="GO_Central"/>
</dbReference>
<dbReference type="GO" id="GO:0050795">
    <property type="term" value="P:regulation of behavior"/>
    <property type="evidence" value="ECO:0007669"/>
    <property type="project" value="InterPro"/>
</dbReference>
<dbReference type="GO" id="GO:2000045">
    <property type="term" value="P:regulation of G1/S transition of mitotic cell cycle"/>
    <property type="evidence" value="ECO:0000314"/>
    <property type="project" value="UniProtKB"/>
</dbReference>
<dbReference type="GO" id="GO:0046883">
    <property type="term" value="P:regulation of hormone secretion"/>
    <property type="evidence" value="ECO:0007669"/>
    <property type="project" value="InterPro"/>
</dbReference>
<dbReference type="GO" id="GO:0019229">
    <property type="term" value="P:regulation of vasoconstriction"/>
    <property type="evidence" value="ECO:0007669"/>
    <property type="project" value="InterPro"/>
</dbReference>
<dbReference type="GO" id="GO:0007210">
    <property type="term" value="P:serotonin receptor signaling pathway"/>
    <property type="evidence" value="ECO:0000250"/>
    <property type="project" value="UniProtKB"/>
</dbReference>
<dbReference type="CDD" id="cd15330">
    <property type="entry name" value="7tmA_5-HT1A_vertebrates"/>
    <property type="match status" value="1"/>
</dbReference>
<dbReference type="FunFam" id="1.20.1070.10:FF:000248">
    <property type="entry name" value="5-hydroxytryptamine receptor 1A-beta"/>
    <property type="match status" value="1"/>
</dbReference>
<dbReference type="Gene3D" id="1.20.1070.10">
    <property type="entry name" value="Rhodopsin 7-helix transmembrane proteins"/>
    <property type="match status" value="1"/>
</dbReference>
<dbReference type="InterPro" id="IPR000610">
    <property type="entry name" value="5HT1A_rcpt"/>
</dbReference>
<dbReference type="InterPro" id="IPR002231">
    <property type="entry name" value="5HT_rcpt"/>
</dbReference>
<dbReference type="InterPro" id="IPR000276">
    <property type="entry name" value="GPCR_Rhodpsn"/>
</dbReference>
<dbReference type="InterPro" id="IPR017452">
    <property type="entry name" value="GPCR_Rhodpsn_7TM"/>
</dbReference>
<dbReference type="PANTHER" id="PTHR24248:SF191">
    <property type="entry name" value="5-HYDROXYTRYPTAMINE RECEPTOR 1A"/>
    <property type="match status" value="1"/>
</dbReference>
<dbReference type="PANTHER" id="PTHR24248">
    <property type="entry name" value="ADRENERGIC RECEPTOR-RELATED G-PROTEIN COUPLED RECEPTOR"/>
    <property type="match status" value="1"/>
</dbReference>
<dbReference type="Pfam" id="PF00001">
    <property type="entry name" value="7tm_1"/>
    <property type="match status" value="1"/>
</dbReference>
<dbReference type="PRINTS" id="PR00512">
    <property type="entry name" value="5HT1ARECEPTR"/>
</dbReference>
<dbReference type="PRINTS" id="PR01101">
    <property type="entry name" value="5HTRECEPTOR"/>
</dbReference>
<dbReference type="PRINTS" id="PR00237">
    <property type="entry name" value="GPCRRHODOPSN"/>
</dbReference>
<dbReference type="SMART" id="SM01381">
    <property type="entry name" value="7TM_GPCR_Srsx"/>
    <property type="match status" value="1"/>
</dbReference>
<dbReference type="SUPFAM" id="SSF81321">
    <property type="entry name" value="Family A G protein-coupled receptor-like"/>
    <property type="match status" value="1"/>
</dbReference>
<dbReference type="PROSITE" id="PS00237">
    <property type="entry name" value="G_PROTEIN_RECEP_F1_1"/>
    <property type="match status" value="1"/>
</dbReference>
<dbReference type="PROSITE" id="PS50262">
    <property type="entry name" value="G_PROTEIN_RECEP_F1_2"/>
    <property type="match status" value="1"/>
</dbReference>
<gene>
    <name evidence="1" type="primary">htr1a</name>
</gene>
<sequence length="408" mass="45788">MDASNNTTSWNILQRGRMGPSWRRCPVSYQIIASLFLGRSFSAGIFGNACVIAAIALERSLQNVANYLIGSLAVTDLMVSVLVLPMAAQNQVLNKWTLGQVTCDIFISLDVLCCTSSILHLCAIALDRYWAITDPIDYVNKRTPRRAAVLISITWIVGFSISIPPMLGWRTPEDRSDPNACRISEDPGYTIYSTFGAFYIPLILMLVLYGKIFKAARFRIRKTVKKAEKKKVADTCLSVSQQSPKEKQRGAQQELEEVGGAQAQRCVNGAIRHGEEGAVLEIIEVHHYVNSKCHLHCKPVPPPEQLPPALKNDRATEAKRKVALARERKTVKTLGIIMGTFILCWLPFFIVALVLPFCETCHMPHLLFDIITWLGYSNSLLNPIIYAYFNKDFQSAFKKIIKCKFCRQ</sequence>
<reference evidence="8 9" key="1">
    <citation type="journal article" date="1997" name="Brain Res. Mol. Brain Res.">
        <title>Cloning and developmental expression of 5-HT1A receptor gene in Xenopus laevis.</title>
        <authorList>
            <person name="Marracci S."/>
            <person name="Cini D."/>
            <person name="Nardi I."/>
        </authorList>
    </citation>
    <scope>NUCLEOTIDE SEQUENCE [MRNA]</scope>
    <scope>TISSUE SPECIFICITY</scope>
    <source>
        <tissue evidence="9">Brain</tissue>
    </source>
</reference>
<reference evidence="8" key="2">
    <citation type="journal article" date="1999" name="Brain Res. Mol. Brain Res.">
        <title>Characterization of a cloned Xenopus laevis serotonin 5-HT1A receptor expressed in the NIH-3T3 cell line.</title>
        <authorList>
            <person name="Cappellini C."/>
            <person name="Malatesta P."/>
            <person name="Costa B."/>
            <person name="Marracci S."/>
            <person name="Nardi I."/>
            <person name="Martini C."/>
        </authorList>
    </citation>
    <scope>FUNCTION</scope>
    <scope>SUBCELLULAR LOCATION</scope>
</reference>
<keyword id="KW-0085">Behavior</keyword>
<keyword id="KW-1003">Cell membrane</keyword>
<keyword id="KW-1015">Disulfide bond</keyword>
<keyword id="KW-0297">G-protein coupled receptor</keyword>
<keyword id="KW-0325">Glycoprotein</keyword>
<keyword id="KW-0472">Membrane</keyword>
<keyword id="KW-0675">Receptor</keyword>
<keyword id="KW-1185">Reference proteome</keyword>
<keyword id="KW-0807">Transducer</keyword>
<keyword id="KW-0812">Transmembrane</keyword>
<keyword id="KW-1133">Transmembrane helix</keyword>
<name>5HT1A_XENLA</name>
<accession>Q98998</accession>
<protein>
    <recommendedName>
        <fullName>5-hydroxytryptamine receptor 1A</fullName>
        <shortName>5-HT-1A</shortName>
        <shortName>5-HT1A</shortName>
        <shortName>x5-HT1A</shortName>
    </recommendedName>
    <alternativeName>
        <fullName>Serotonin receptor 1A</fullName>
    </alternativeName>
</protein>
<proteinExistence type="evidence at transcript level"/>
<comment type="function">
    <text evidence="1 7">G-protein coupled receptor for 5-hydroxytryptamine (serotonin) (PubMed:9878840). Also functions as a receptor for various drugs and psychoactive substances (By similarity). Ligand binding causes a conformation change that triggers signaling via guanine nucleotide-binding proteins (G proteins) and modulates the activity of downstream effectors, such as adenylate cyclase (By similarity). HTR1A is coupled to G(i)/G(o) G alpha proteins and mediates inhibitory neurotransmission: signaling inhibits adenylate cyclase activity and activates a phosphatidylinositol-calcium second messenger system that regulates the release of Ca(2+) ions from intracellular stores (By similarity). Beta-arrestin family members regulate signaling by mediating both receptor desensitization and resensitization processes (By similarity). Activation of the receptor may play a role in the exit from G0 phase and in promoting DNA synthesis (PubMed:9878840).</text>
</comment>
<comment type="activity regulation">
    <text evidence="1">G-protein coupled receptor activity is regulated by lipids: phosphatidylinositol 4-phosphate increases HTR1A-mediated activity.</text>
</comment>
<comment type="subcellular location">
    <subcellularLocation>
        <location evidence="7">Cell membrane</location>
        <topology evidence="3 7">Multi-pass membrane protein</topology>
    </subcellularLocation>
</comment>
<comment type="tissue specificity">
    <text evidence="6">First expressed in the rostral part of the brain stem at stage 22. At later stages of development, expression is localized to serotonergic neurons. The expression pattern changes in the tadpole of stage 41 where, in addition to serotonergic neurons, expression is also localized to the inner nuclear layer (INL) of the developing retina. This expression pattern continues through to the start of metamorphosis (stage 46). In adults, expressed in the brain, in particular the telencephalon, diencephalon and mesencephalon. In the telencephalic region, expression is localized to the lateral, dorsal and medial pallium, and in the striatum, septum and amygdala. In the mesencephalic region, expression is strongest in the optic tectum and torus semicircularis with moderate levels of expression in tegmental nuclei. In diencephalon, localized to the dorsal and ventral thalamus and the preoptic area of the hypothalamus.</text>
</comment>
<comment type="similarity">
    <text evidence="4">Belongs to the G-protein coupled receptor 1 family. 5-hydroxytryptamine receptor subfamily. HTR1A sub-subfamily.</text>
</comment>
<organism>
    <name type="scientific">Xenopus laevis</name>
    <name type="common">African clawed frog</name>
    <dbReference type="NCBI Taxonomy" id="8355"/>
    <lineage>
        <taxon>Eukaryota</taxon>
        <taxon>Metazoa</taxon>
        <taxon>Chordata</taxon>
        <taxon>Craniata</taxon>
        <taxon>Vertebrata</taxon>
        <taxon>Euteleostomi</taxon>
        <taxon>Amphibia</taxon>
        <taxon>Batrachia</taxon>
        <taxon>Anura</taxon>
        <taxon>Pipoidea</taxon>
        <taxon>Pipidae</taxon>
        <taxon>Xenopodinae</taxon>
        <taxon>Xenopus</taxon>
        <taxon>Xenopus</taxon>
    </lineage>
</organism>
<feature type="chain" id="PRO_0000245784" description="5-hydroxytryptamine receptor 1A">
    <location>
        <begin position="1"/>
        <end position="408"/>
    </location>
</feature>
<feature type="topological domain" description="Extracellular" evidence="1">
    <location>
        <begin position="1"/>
        <end position="32"/>
    </location>
</feature>
<feature type="transmembrane region" description="Helical; Name=1" evidence="1">
    <location>
        <begin position="33"/>
        <end position="53"/>
    </location>
</feature>
<feature type="topological domain" description="Cytoplasmic" evidence="1">
    <location>
        <begin position="54"/>
        <end position="67"/>
    </location>
</feature>
<feature type="transmembrane region" description="Helical; Name=2" evidence="1">
    <location>
        <begin position="68"/>
        <end position="92"/>
    </location>
</feature>
<feature type="topological domain" description="Extracellular" evidence="1">
    <location>
        <begin position="93"/>
        <end position="101"/>
    </location>
</feature>
<feature type="transmembrane region" description="Helical; Name=3" evidence="1">
    <location>
        <begin position="102"/>
        <end position="126"/>
    </location>
</feature>
<feature type="topological domain" description="Cytoplasmic" evidence="1">
    <location>
        <begin position="127"/>
        <end position="146"/>
    </location>
</feature>
<feature type="transmembrane region" description="Helical; Name=4" evidence="1">
    <location>
        <begin position="147"/>
        <end position="168"/>
    </location>
</feature>
<feature type="topological domain" description="Extracellular" evidence="1">
    <location>
        <begin position="169"/>
        <end position="187"/>
    </location>
</feature>
<feature type="transmembrane region" description="Helical; Name=5" evidence="1">
    <location>
        <begin position="188"/>
        <end position="210"/>
    </location>
</feature>
<feature type="topological domain" description="Cytoplasmic" evidence="1">
    <location>
        <begin position="211"/>
        <end position="333"/>
    </location>
</feature>
<feature type="transmembrane region" description="Helical; Name=6" evidence="1">
    <location>
        <begin position="334"/>
        <end position="357"/>
    </location>
</feature>
<feature type="topological domain" description="Extracellular" evidence="1">
    <location>
        <begin position="358"/>
        <end position="364"/>
    </location>
</feature>
<feature type="transmembrane region" description="Helical; Name=7" evidence="1">
    <location>
        <begin position="365"/>
        <end position="389"/>
    </location>
</feature>
<feature type="topological domain" description="Cytoplasmic" evidence="1">
    <location>
        <begin position="390"/>
        <end position="408"/>
    </location>
</feature>
<feature type="region of interest" description="Disordered" evidence="5">
    <location>
        <begin position="235"/>
        <end position="255"/>
    </location>
</feature>
<feature type="short sequence motif" description="DRY motif; important for ligand-induced conformation changes" evidence="2">
    <location>
        <begin position="127"/>
        <end position="129"/>
    </location>
</feature>
<feature type="short sequence motif" description="NPxxY motif; important for ligand-induced conformation changes and signaling" evidence="2">
    <location>
        <begin position="382"/>
        <end position="386"/>
    </location>
</feature>
<feature type="binding site" evidence="1">
    <location>
        <position position="110"/>
    </location>
    <ligand>
        <name>serotonin</name>
        <dbReference type="ChEBI" id="CHEBI:350546"/>
    </ligand>
</feature>
<feature type="binding site" evidence="1">
    <location>
        <position position="114"/>
    </location>
    <ligand>
        <name>serotonin</name>
        <dbReference type="ChEBI" id="CHEBI:350546"/>
    </ligand>
</feature>
<feature type="binding site" evidence="1">
    <location>
        <position position="332"/>
    </location>
    <ligand>
        <name>1D-myo-inositol 4-phosphate</name>
        <dbReference type="ChEBI" id="CHEBI:58469"/>
    </ligand>
</feature>
<feature type="binding site" evidence="1">
    <location>
        <position position="333"/>
    </location>
    <ligand>
        <name>1D-myo-inositol 4-phosphate</name>
        <dbReference type="ChEBI" id="CHEBI:58469"/>
    </ligand>
</feature>
<feature type="binding site" evidence="1">
    <location>
        <position position="339"/>
    </location>
    <ligand>
        <name>1D-myo-inositol 4-phosphate</name>
        <dbReference type="ChEBI" id="CHEBI:58469"/>
    </ligand>
</feature>
<feature type="binding site" evidence="1">
    <location>
        <position position="389"/>
    </location>
    <ligand>
        <name>1D-myo-inositol 4-phosphate</name>
        <dbReference type="ChEBI" id="CHEBI:58469"/>
    </ligand>
</feature>
<feature type="binding site" evidence="1">
    <location>
        <position position="390"/>
    </location>
    <ligand>
        <name>1D-myo-inositol 4-phosphate</name>
        <dbReference type="ChEBI" id="CHEBI:58469"/>
    </ligand>
</feature>
<feature type="binding site" evidence="1">
    <location>
        <position position="391"/>
    </location>
    <ligand>
        <name>1D-myo-inositol 4-phosphate</name>
        <dbReference type="ChEBI" id="CHEBI:58469"/>
    </ligand>
</feature>
<feature type="glycosylation site" description="N-linked (GlcNAc...) asparagine" evidence="3">
    <location>
        <position position="5"/>
    </location>
</feature>
<feature type="glycosylation site" description="N-linked (GlcNAc...) asparagine" evidence="3">
    <location>
        <position position="6"/>
    </location>
</feature>
<feature type="disulfide bond" evidence="1 4">
    <location>
        <begin position="103"/>
        <end position="181"/>
    </location>
</feature>
<evidence type="ECO:0000250" key="1">
    <source>
        <dbReference type="UniProtKB" id="P08908"/>
    </source>
</evidence>
<evidence type="ECO:0000250" key="2">
    <source>
        <dbReference type="UniProtKB" id="P41595"/>
    </source>
</evidence>
<evidence type="ECO:0000255" key="3"/>
<evidence type="ECO:0000255" key="4">
    <source>
        <dbReference type="PROSITE-ProRule" id="PRU00521"/>
    </source>
</evidence>
<evidence type="ECO:0000256" key="5">
    <source>
        <dbReference type="SAM" id="MobiDB-lite"/>
    </source>
</evidence>
<evidence type="ECO:0000269" key="6">
    <source>
    </source>
</evidence>
<evidence type="ECO:0000269" key="7">
    <source>
    </source>
</evidence>
<evidence type="ECO:0000305" key="8"/>
<evidence type="ECO:0000312" key="9">
    <source>
        <dbReference type="EMBL" id="CAA69208.1"/>
    </source>
</evidence>